<organism>
    <name type="scientific">Schizosaccharomyces pombe (strain 972 / ATCC 24843)</name>
    <name type="common">Fission yeast</name>
    <dbReference type="NCBI Taxonomy" id="284812"/>
    <lineage>
        <taxon>Eukaryota</taxon>
        <taxon>Fungi</taxon>
        <taxon>Dikarya</taxon>
        <taxon>Ascomycota</taxon>
        <taxon>Taphrinomycotina</taxon>
        <taxon>Schizosaccharomycetes</taxon>
        <taxon>Schizosaccharomycetales</taxon>
        <taxon>Schizosaccharomycetaceae</taxon>
        <taxon>Schizosaccharomyces</taxon>
    </lineage>
</organism>
<evidence type="ECO:0000250" key="1"/>
<evidence type="ECO:0000255" key="2"/>
<evidence type="ECO:0000255" key="3">
    <source>
        <dbReference type="PROSITE-ProRule" id="PRU00231"/>
    </source>
</evidence>
<evidence type="ECO:0000255" key="4">
    <source>
        <dbReference type="PROSITE-ProRule" id="PRU00290"/>
    </source>
</evidence>
<evidence type="ECO:0000269" key="5">
    <source>
    </source>
</evidence>
<evidence type="ECO:0000305" key="6"/>
<gene>
    <name type="primary">sec22</name>
    <name type="ORF">SPBC2A9.08c</name>
</gene>
<name>SEC22_SCHPO</name>
<dbReference type="EMBL" id="CU329671">
    <property type="protein sequence ID" value="CAB39850.2"/>
    <property type="molecule type" value="Genomic_DNA"/>
</dbReference>
<dbReference type="PIR" id="T40099">
    <property type="entry name" value="T40099"/>
</dbReference>
<dbReference type="RefSeq" id="NP_596218.2">
    <property type="nucleotide sequence ID" value="NM_001022137.2"/>
</dbReference>
<dbReference type="SMR" id="Q9Y7L0"/>
<dbReference type="BioGRID" id="276838">
    <property type="interactions" value="3"/>
</dbReference>
<dbReference type="FunCoup" id="Q9Y7L0">
    <property type="interactions" value="843"/>
</dbReference>
<dbReference type="STRING" id="284812.Q9Y7L0"/>
<dbReference type="iPTMnet" id="Q9Y7L0"/>
<dbReference type="PaxDb" id="4896-SPBC2A9.08c.1"/>
<dbReference type="EnsemblFungi" id="SPBC2A9.08c.1">
    <property type="protein sequence ID" value="SPBC2A9.08c.1:pep"/>
    <property type="gene ID" value="SPBC2A9.08c"/>
</dbReference>
<dbReference type="GeneID" id="2540308"/>
<dbReference type="KEGG" id="spo:2540308"/>
<dbReference type="PomBase" id="SPBC2A9.08c">
    <property type="gene designation" value="sec22"/>
</dbReference>
<dbReference type="VEuPathDB" id="FungiDB:SPBC2A9.08c"/>
<dbReference type="eggNOG" id="KOG0862">
    <property type="taxonomic scope" value="Eukaryota"/>
</dbReference>
<dbReference type="HOGENOM" id="CLU_054453_4_1_1"/>
<dbReference type="InParanoid" id="Q9Y7L0"/>
<dbReference type="OMA" id="FIYWRFF"/>
<dbReference type="Reactome" id="R-SPO-204005">
    <property type="pathway name" value="COPII-mediated vesicle transport"/>
</dbReference>
<dbReference type="Reactome" id="R-SPO-5694530">
    <property type="pathway name" value="Cargo concentration in the ER"/>
</dbReference>
<dbReference type="Reactome" id="R-SPO-6811434">
    <property type="pathway name" value="COPI-dependent Golgi-to-ER retrograde traffic"/>
</dbReference>
<dbReference type="PRO" id="PR:Q9Y7L0"/>
<dbReference type="Proteomes" id="UP000002485">
    <property type="component" value="Chromosome II"/>
</dbReference>
<dbReference type="GO" id="GO:0005789">
    <property type="term" value="C:endoplasmic reticulum membrane"/>
    <property type="evidence" value="ECO:0000318"/>
    <property type="project" value="GO_Central"/>
</dbReference>
<dbReference type="GO" id="GO:0012507">
    <property type="term" value="C:ER to Golgi transport vesicle membrane"/>
    <property type="evidence" value="ECO:0000318"/>
    <property type="project" value="GO_Central"/>
</dbReference>
<dbReference type="GO" id="GO:0000139">
    <property type="term" value="C:Golgi membrane"/>
    <property type="evidence" value="ECO:0000318"/>
    <property type="project" value="GO_Central"/>
</dbReference>
<dbReference type="GO" id="GO:0031201">
    <property type="term" value="C:SNARE complex"/>
    <property type="evidence" value="ECO:0000318"/>
    <property type="project" value="GO_Central"/>
</dbReference>
<dbReference type="GO" id="GO:0005484">
    <property type="term" value="F:SNAP receptor activity"/>
    <property type="evidence" value="ECO:0000318"/>
    <property type="project" value="GO_Central"/>
</dbReference>
<dbReference type="GO" id="GO:0006888">
    <property type="term" value="P:endoplasmic reticulum to Golgi vesicle-mediated transport"/>
    <property type="evidence" value="ECO:0000318"/>
    <property type="project" value="GO_Central"/>
</dbReference>
<dbReference type="GO" id="GO:0006886">
    <property type="term" value="P:intracellular protein transport"/>
    <property type="evidence" value="ECO:0000303"/>
    <property type="project" value="PomBase"/>
</dbReference>
<dbReference type="GO" id="GO:0006890">
    <property type="term" value="P:retrograde vesicle-mediated transport, Golgi to endoplasmic reticulum"/>
    <property type="evidence" value="ECO:0000318"/>
    <property type="project" value="GO_Central"/>
</dbReference>
<dbReference type="GO" id="GO:0048280">
    <property type="term" value="P:vesicle fusion with Golgi apparatus"/>
    <property type="evidence" value="ECO:0000318"/>
    <property type="project" value="GO_Central"/>
</dbReference>
<dbReference type="CDD" id="cd14824">
    <property type="entry name" value="Longin"/>
    <property type="match status" value="1"/>
</dbReference>
<dbReference type="CDD" id="cd15866">
    <property type="entry name" value="R-SNARE_SEC22"/>
    <property type="match status" value="1"/>
</dbReference>
<dbReference type="FunFam" id="3.30.450.50:FF:000007">
    <property type="entry name" value="SNARE complex subunit SEC22"/>
    <property type="match status" value="1"/>
</dbReference>
<dbReference type="Gene3D" id="1.20.5.110">
    <property type="match status" value="1"/>
</dbReference>
<dbReference type="Gene3D" id="3.30.450.50">
    <property type="entry name" value="Longin domain"/>
    <property type="match status" value="1"/>
</dbReference>
<dbReference type="InterPro" id="IPR011012">
    <property type="entry name" value="Longin-like_dom_sf"/>
</dbReference>
<dbReference type="InterPro" id="IPR010908">
    <property type="entry name" value="Longin_dom"/>
</dbReference>
<dbReference type="InterPro" id="IPR044565">
    <property type="entry name" value="Sec22"/>
</dbReference>
<dbReference type="InterPro" id="IPR042855">
    <property type="entry name" value="V_SNARE_CC"/>
</dbReference>
<dbReference type="PANTHER" id="PTHR45837">
    <property type="entry name" value="VESICLE-TRAFFICKING PROTEIN SEC22B"/>
    <property type="match status" value="1"/>
</dbReference>
<dbReference type="Pfam" id="PF13774">
    <property type="entry name" value="Longin"/>
    <property type="match status" value="1"/>
</dbReference>
<dbReference type="Pfam" id="PF00957">
    <property type="entry name" value="Synaptobrevin"/>
    <property type="match status" value="1"/>
</dbReference>
<dbReference type="SMART" id="SM01270">
    <property type="entry name" value="Longin"/>
    <property type="match status" value="1"/>
</dbReference>
<dbReference type="SUPFAM" id="SSF58038">
    <property type="entry name" value="SNARE fusion complex"/>
    <property type="match status" value="1"/>
</dbReference>
<dbReference type="SUPFAM" id="SSF64356">
    <property type="entry name" value="SNARE-like"/>
    <property type="match status" value="1"/>
</dbReference>
<dbReference type="PROSITE" id="PS50859">
    <property type="entry name" value="LONGIN"/>
    <property type="match status" value="1"/>
</dbReference>
<dbReference type="PROSITE" id="PS50892">
    <property type="entry name" value="V_SNARE"/>
    <property type="match status" value="1"/>
</dbReference>
<proteinExistence type="inferred from homology"/>
<comment type="function">
    <text evidence="1">Nonessential SNARE involved in targeting and fusion of ER-derived transport vesicles with the Golgi complex as well as Golgi-derived retrograde transport vesicles with the ER.</text>
</comment>
<comment type="subunit">
    <text evidence="1">Component of two distinct SNARE complexes consisting of sed5, bos1, bet1 and sec22 or ufe1, use1, sec20 and sec22. Ykt6 can probably replace sec22 as subunit of either complex (By similarity).</text>
</comment>
<comment type="subcellular location">
    <subcellularLocation>
        <location evidence="6">Membrane</location>
        <topology evidence="6">Single-pass type IV membrane protein</topology>
    </subcellularLocation>
    <subcellularLocation>
        <location evidence="6">Endoplasmic reticulum membrane</location>
        <topology evidence="6">Single-pass type IV membrane protein</topology>
    </subcellularLocation>
    <subcellularLocation>
        <location evidence="6">Golgi apparatus membrane</location>
        <topology evidence="6">Single-pass type IV membrane protein</topology>
    </subcellularLocation>
</comment>
<comment type="disruption phenotype">
    <text evidence="5">Leads to sensitivity to thiabendazole, camptothecin, DNA damaging agents, and microtubule depolymerizing drugs.</text>
</comment>
<comment type="similarity">
    <text evidence="6">Belongs to the synaptobrevin family.</text>
</comment>
<feature type="chain" id="PRO_0000206767" description="Protein transport protein sec22">
    <location>
        <begin position="1"/>
        <end position="215"/>
    </location>
</feature>
<feature type="topological domain" description="Cytoplasmic" evidence="2">
    <location>
        <begin position="1"/>
        <end position="194"/>
    </location>
</feature>
<feature type="transmembrane region" description="Helical; Anchor for type IV membrane protein" evidence="2">
    <location>
        <begin position="195"/>
        <end position="215"/>
    </location>
</feature>
<feature type="domain" description="Longin" evidence="3">
    <location>
        <begin position="9"/>
        <end position="118"/>
    </location>
</feature>
<feature type="domain" description="v-SNARE coiled-coil homology" evidence="4">
    <location>
        <begin position="133"/>
        <end position="193"/>
    </location>
</feature>
<sequence>MVKSTTVTRLDGLPLAASVDDESTERNLESHKKQAKLILKRLSPTSEKRASIESGDYTFHYLIDNGICYLCICEQSYPRKLAFSYLEELAGEFWNSFGEEALQPGLRPYAFVQFDTFMQKSKRVYNTPRANDNLDKLNTELKDVTRVMTKNIEDLLYRGDSLEKMADLSSDLRYSSAKYKKAARRVNLEALWRQYGPVSIIALLFLIFVYWRFFA</sequence>
<accession>Q9Y7L0</accession>
<protein>
    <recommendedName>
        <fullName>Protein transport protein sec22</fullName>
    </recommendedName>
</protein>
<reference key="1">
    <citation type="journal article" date="2002" name="Nature">
        <title>The genome sequence of Schizosaccharomyces pombe.</title>
        <authorList>
            <person name="Wood V."/>
            <person name="Gwilliam R."/>
            <person name="Rajandream M.A."/>
            <person name="Lyne M.H."/>
            <person name="Lyne R."/>
            <person name="Stewart A."/>
            <person name="Sgouros J.G."/>
            <person name="Peat N."/>
            <person name="Hayles J."/>
            <person name="Baker S.G."/>
            <person name="Basham D."/>
            <person name="Bowman S."/>
            <person name="Brooks K."/>
            <person name="Brown D."/>
            <person name="Brown S."/>
            <person name="Chillingworth T."/>
            <person name="Churcher C.M."/>
            <person name="Collins M."/>
            <person name="Connor R."/>
            <person name="Cronin A."/>
            <person name="Davis P."/>
            <person name="Feltwell T."/>
            <person name="Fraser A."/>
            <person name="Gentles S."/>
            <person name="Goble A."/>
            <person name="Hamlin N."/>
            <person name="Harris D.E."/>
            <person name="Hidalgo J."/>
            <person name="Hodgson G."/>
            <person name="Holroyd S."/>
            <person name="Hornsby T."/>
            <person name="Howarth S."/>
            <person name="Huckle E.J."/>
            <person name="Hunt S."/>
            <person name="Jagels K."/>
            <person name="James K.D."/>
            <person name="Jones L."/>
            <person name="Jones M."/>
            <person name="Leather S."/>
            <person name="McDonald S."/>
            <person name="McLean J."/>
            <person name="Mooney P."/>
            <person name="Moule S."/>
            <person name="Mungall K.L."/>
            <person name="Murphy L.D."/>
            <person name="Niblett D."/>
            <person name="Odell C."/>
            <person name="Oliver K."/>
            <person name="O'Neil S."/>
            <person name="Pearson D."/>
            <person name="Quail M.A."/>
            <person name="Rabbinowitsch E."/>
            <person name="Rutherford K.M."/>
            <person name="Rutter S."/>
            <person name="Saunders D."/>
            <person name="Seeger K."/>
            <person name="Sharp S."/>
            <person name="Skelton J."/>
            <person name="Simmonds M.N."/>
            <person name="Squares R."/>
            <person name="Squares S."/>
            <person name="Stevens K."/>
            <person name="Taylor K."/>
            <person name="Taylor R.G."/>
            <person name="Tivey A."/>
            <person name="Walsh S.V."/>
            <person name="Warren T."/>
            <person name="Whitehead S."/>
            <person name="Woodward J.R."/>
            <person name="Volckaert G."/>
            <person name="Aert R."/>
            <person name="Robben J."/>
            <person name="Grymonprez B."/>
            <person name="Weltjens I."/>
            <person name="Vanstreels E."/>
            <person name="Rieger M."/>
            <person name="Schaefer M."/>
            <person name="Mueller-Auer S."/>
            <person name="Gabel C."/>
            <person name="Fuchs M."/>
            <person name="Duesterhoeft A."/>
            <person name="Fritzc C."/>
            <person name="Holzer E."/>
            <person name="Moestl D."/>
            <person name="Hilbert H."/>
            <person name="Borzym K."/>
            <person name="Langer I."/>
            <person name="Beck A."/>
            <person name="Lehrach H."/>
            <person name="Reinhardt R."/>
            <person name="Pohl T.M."/>
            <person name="Eger P."/>
            <person name="Zimmermann W."/>
            <person name="Wedler H."/>
            <person name="Wambutt R."/>
            <person name="Purnelle B."/>
            <person name="Goffeau A."/>
            <person name="Cadieu E."/>
            <person name="Dreano S."/>
            <person name="Gloux S."/>
            <person name="Lelaure V."/>
            <person name="Mottier S."/>
            <person name="Galibert F."/>
            <person name="Aves S.J."/>
            <person name="Xiang Z."/>
            <person name="Hunt C."/>
            <person name="Moore K."/>
            <person name="Hurst S.M."/>
            <person name="Lucas M."/>
            <person name="Rochet M."/>
            <person name="Gaillardin C."/>
            <person name="Tallada V.A."/>
            <person name="Garzon A."/>
            <person name="Thode G."/>
            <person name="Daga R.R."/>
            <person name="Cruzado L."/>
            <person name="Jimenez J."/>
            <person name="Sanchez M."/>
            <person name="del Rey F."/>
            <person name="Benito J."/>
            <person name="Dominguez A."/>
            <person name="Revuelta J.L."/>
            <person name="Moreno S."/>
            <person name="Armstrong J."/>
            <person name="Forsburg S.L."/>
            <person name="Cerutti L."/>
            <person name="Lowe T."/>
            <person name="McCombie W.R."/>
            <person name="Paulsen I."/>
            <person name="Potashkin J."/>
            <person name="Shpakovski G.V."/>
            <person name="Ussery D."/>
            <person name="Barrell B.G."/>
            <person name="Nurse P."/>
        </authorList>
    </citation>
    <scope>NUCLEOTIDE SEQUENCE [LARGE SCALE GENOMIC DNA]</scope>
    <source>
        <strain>972 / ATCC 24843</strain>
    </source>
</reference>
<reference key="2">
    <citation type="journal article" date="2011" name="Science">
        <title>Comparative functional genomics of the fission yeasts.</title>
        <authorList>
            <person name="Rhind N."/>
            <person name="Chen Z."/>
            <person name="Yassour M."/>
            <person name="Thompson D.A."/>
            <person name="Haas B.J."/>
            <person name="Habib N."/>
            <person name="Wapinski I."/>
            <person name="Roy S."/>
            <person name="Lin M.F."/>
            <person name="Heiman D.I."/>
            <person name="Young S.K."/>
            <person name="Furuya K."/>
            <person name="Guo Y."/>
            <person name="Pidoux A."/>
            <person name="Chen H.M."/>
            <person name="Robbertse B."/>
            <person name="Goldberg J.M."/>
            <person name="Aoki K."/>
            <person name="Bayne E.H."/>
            <person name="Berlin A.M."/>
            <person name="Desjardins C.A."/>
            <person name="Dobbs E."/>
            <person name="Dukaj L."/>
            <person name="Fan L."/>
            <person name="FitzGerald M.G."/>
            <person name="French C."/>
            <person name="Gujja S."/>
            <person name="Hansen K."/>
            <person name="Keifenheim D."/>
            <person name="Levin J.Z."/>
            <person name="Mosher R.A."/>
            <person name="Mueller C.A."/>
            <person name="Pfiffner J."/>
            <person name="Priest M."/>
            <person name="Russ C."/>
            <person name="Smialowska A."/>
            <person name="Swoboda P."/>
            <person name="Sykes S.M."/>
            <person name="Vaughn M."/>
            <person name="Vengrova S."/>
            <person name="Yoder R."/>
            <person name="Zeng Q."/>
            <person name="Allshire R."/>
            <person name="Baulcombe D."/>
            <person name="Birren B.W."/>
            <person name="Brown W."/>
            <person name="Ekwall K."/>
            <person name="Kellis M."/>
            <person name="Leatherwood J."/>
            <person name="Levin H."/>
            <person name="Margalit H."/>
            <person name="Martienssen R."/>
            <person name="Nieduszynski C.A."/>
            <person name="Spatafora J.W."/>
            <person name="Friedman N."/>
            <person name="Dalgaard J.Z."/>
            <person name="Baumann P."/>
            <person name="Niki H."/>
            <person name="Regev A."/>
            <person name="Nusbaum C."/>
        </authorList>
    </citation>
    <scope>REVISION OF GENE MODEL</scope>
</reference>
<reference key="3">
    <citation type="journal article" date="2010" name="Genome Biol.">
        <title>Global fitness profiling of fission yeast deletion strains by barcode sequencing.</title>
        <authorList>
            <person name="Han T.X."/>
            <person name="Xu X.Y."/>
            <person name="Zhang M.J."/>
            <person name="Peng X."/>
            <person name="Du L.L."/>
        </authorList>
    </citation>
    <scope>DISRUPTION PHENOTYPE</scope>
</reference>
<keyword id="KW-0175">Coiled coil</keyword>
<keyword id="KW-0256">Endoplasmic reticulum</keyword>
<keyword id="KW-0931">ER-Golgi transport</keyword>
<keyword id="KW-0333">Golgi apparatus</keyword>
<keyword id="KW-0472">Membrane</keyword>
<keyword id="KW-0653">Protein transport</keyword>
<keyword id="KW-1185">Reference proteome</keyword>
<keyword id="KW-0812">Transmembrane</keyword>
<keyword id="KW-1133">Transmembrane helix</keyword>
<keyword id="KW-0813">Transport</keyword>